<gene>
    <name type="primary">TDRD5</name>
</gene>
<sequence length="975" mass="109626">MSEQERIQECLRKEIRSLLISTKDGLTPQQLEKEYLLMVGNHLPLRILGYRSTMELVLDMPDVVSVCPCGDGTVILKAIPDESTKGIANLVAKQKSNHKVRNSMQKGRASVCSGPSSRRRVPYRGRVPPILPAVVKSELKDLLALSPVLLSDFENAFANRFGRSFQYVQYGFLSMFEVLNAASDVISVEQTRAGSLLTLKKSVSEEKQRGWPAAKGKIFTQPFRMKQQGSYPIGFPVAKACFSQPTSNMEPPKQILGMERNSRSNVMETSRLNHSEKLNQLALTLQSWVVSHYGFNGSFSSAKKHKAMYTLRKFTENLMVCCLFNEYMLIFKEQLSPKKLGFLNVIELVGALSDILHVEFREGEQDLLVFDADMKPLASVQPDKKTEAKACVSSPPRNSLSTAVIKETTWDCPSKNHKEPEQKIFKKPNLVVKPLQLQVEINKSQLSLAVANHDIPPDAVRDKKLCRLPPLDTSTLVGVFVEYILSPSQFYIRIYSRDSSELLEDMMIEMRRCYSNQLVSDRYAMPECFIQPGHLCCVRISEDKWWYRVIIHRILGKQEVEVFYPDFGNIGTVQKSSLRFLKCCYTKLPAQAIPCSLAWVRPVEEHWTSRAVLQFQKLCGLKPLVGVVDEYVDGILNIFLCDTSSNEDVYFHHVLRTEGHAIVCRENVPSKGFRDLNPLALYTKSSVTPEDIVLKELGYHSQQHYFNEDREISPQSKESDLYTLDEIPTGMPYLESVTIGDDIWDENWLPLQAKMGKESDAASHLFTSSLGGKKPYPSCKEIPQKDWCFSTPKDIWDDSWQPSGLVNGMKVEVQIPEGLGAQEKHIDTTRIQKQSNVKSASDSPALPKLEEFYISLIQSQQSAEGSQFEPSNIQTPPKQIQLSSTPTLVNSGSVEGSPESLENEDFSSSSAITVFKDTSQGAVDQLSLILSPEHQISQKFYIPRSTATAALGAAARLATSNSLLHWYPSVKKMET</sequence>
<accession>E1BPH3</accession>
<organism>
    <name type="scientific">Bos taurus</name>
    <name type="common">Bovine</name>
    <dbReference type="NCBI Taxonomy" id="9913"/>
    <lineage>
        <taxon>Eukaryota</taxon>
        <taxon>Metazoa</taxon>
        <taxon>Chordata</taxon>
        <taxon>Craniata</taxon>
        <taxon>Vertebrata</taxon>
        <taxon>Euteleostomi</taxon>
        <taxon>Mammalia</taxon>
        <taxon>Eutheria</taxon>
        <taxon>Laurasiatheria</taxon>
        <taxon>Artiodactyla</taxon>
        <taxon>Ruminantia</taxon>
        <taxon>Pecora</taxon>
        <taxon>Bovidae</taxon>
        <taxon>Bovinae</taxon>
        <taxon>Bos</taxon>
    </lineage>
</organism>
<dbReference type="EMBL" id="AAFC03057220">
    <property type="status" value="NOT_ANNOTATED_CDS"/>
    <property type="molecule type" value="Genomic_DNA"/>
</dbReference>
<dbReference type="EMBL" id="AAFC03065883">
    <property type="status" value="NOT_ANNOTATED_CDS"/>
    <property type="molecule type" value="Genomic_DNA"/>
</dbReference>
<dbReference type="EMBL" id="AAFC03065884">
    <property type="status" value="NOT_ANNOTATED_CDS"/>
    <property type="molecule type" value="Genomic_DNA"/>
</dbReference>
<dbReference type="EMBL" id="AAFC03065886">
    <property type="status" value="NOT_ANNOTATED_CDS"/>
    <property type="molecule type" value="Genomic_DNA"/>
</dbReference>
<dbReference type="EMBL" id="AAFC03117511">
    <property type="status" value="NOT_ANNOTATED_CDS"/>
    <property type="molecule type" value="Genomic_DNA"/>
</dbReference>
<dbReference type="EMBL" id="AAFC03125112">
    <property type="status" value="NOT_ANNOTATED_CDS"/>
    <property type="molecule type" value="Genomic_DNA"/>
</dbReference>
<dbReference type="SMR" id="E1BPH3"/>
<dbReference type="FunCoup" id="E1BPH3">
    <property type="interactions" value="79"/>
</dbReference>
<dbReference type="STRING" id="9913.ENSBTAP00000003118"/>
<dbReference type="PaxDb" id="9913-ENSBTAP00000003118"/>
<dbReference type="eggNOG" id="KOG2039">
    <property type="taxonomic scope" value="Eukaryota"/>
</dbReference>
<dbReference type="InParanoid" id="E1BPH3"/>
<dbReference type="Proteomes" id="UP000009136">
    <property type="component" value="Unplaced"/>
</dbReference>
<dbReference type="GO" id="GO:0033391">
    <property type="term" value="C:chromatoid body"/>
    <property type="evidence" value="ECO:0000250"/>
    <property type="project" value="UniProtKB"/>
</dbReference>
<dbReference type="GO" id="GO:0071546">
    <property type="term" value="C:pi-body"/>
    <property type="evidence" value="ECO:0000250"/>
    <property type="project" value="UniProtKB"/>
</dbReference>
<dbReference type="GO" id="GO:0030719">
    <property type="term" value="P:P granule organization"/>
    <property type="evidence" value="ECO:0000250"/>
    <property type="project" value="UniProtKB"/>
</dbReference>
<dbReference type="GO" id="GO:0007286">
    <property type="term" value="P:spermatid development"/>
    <property type="evidence" value="ECO:0000250"/>
    <property type="project" value="UniProtKB"/>
</dbReference>
<dbReference type="GO" id="GO:0141196">
    <property type="term" value="P:transposable element silencing by piRNA-mediated DNA methylation"/>
    <property type="evidence" value="ECO:0000250"/>
    <property type="project" value="UniProtKB"/>
</dbReference>
<dbReference type="CDD" id="cd09985">
    <property type="entry name" value="LOTUS_1_TDRD5"/>
    <property type="match status" value="1"/>
</dbReference>
<dbReference type="CDD" id="cd09975">
    <property type="entry name" value="LOTUS_2_TDRD5"/>
    <property type="match status" value="1"/>
</dbReference>
<dbReference type="CDD" id="cd20419">
    <property type="entry name" value="Tudor_TDRD5"/>
    <property type="match status" value="1"/>
</dbReference>
<dbReference type="FunFam" id="2.30.30.140:FF:000051">
    <property type="entry name" value="Tudor domain-containing protein 5"/>
    <property type="match status" value="1"/>
</dbReference>
<dbReference type="FunFam" id="3.30.420.610:FF:000005">
    <property type="entry name" value="Tudor domain-containing protein 5"/>
    <property type="match status" value="1"/>
</dbReference>
<dbReference type="FunFam" id="3.30.420.610:FF:000007">
    <property type="entry name" value="Tudor domain-containing protein 5"/>
    <property type="match status" value="1"/>
</dbReference>
<dbReference type="Gene3D" id="2.30.30.140">
    <property type="match status" value="1"/>
</dbReference>
<dbReference type="Gene3D" id="2.40.50.90">
    <property type="match status" value="1"/>
</dbReference>
<dbReference type="Gene3D" id="3.30.420.610">
    <property type="entry name" value="LOTUS domain-like"/>
    <property type="match status" value="3"/>
</dbReference>
<dbReference type="InterPro" id="IPR041966">
    <property type="entry name" value="LOTUS-like"/>
</dbReference>
<dbReference type="InterPro" id="IPR025605">
    <property type="entry name" value="OST-HTH/LOTUS_dom"/>
</dbReference>
<dbReference type="InterPro" id="IPR035437">
    <property type="entry name" value="SNase_OB-fold_sf"/>
</dbReference>
<dbReference type="InterPro" id="IPR037982">
    <property type="entry name" value="TDRD5_LOTUS_2"/>
</dbReference>
<dbReference type="InterPro" id="IPR002999">
    <property type="entry name" value="Tudor"/>
</dbReference>
<dbReference type="InterPro" id="IPR050621">
    <property type="entry name" value="Tudor_domain_containing"/>
</dbReference>
<dbReference type="PANTHER" id="PTHR22948">
    <property type="entry name" value="TUDOR DOMAIN CONTAINING PROTEIN"/>
    <property type="match status" value="1"/>
</dbReference>
<dbReference type="PANTHER" id="PTHR22948:SF19">
    <property type="entry name" value="TUDOR DOMAIN-CONTAINING PROTEIN 5"/>
    <property type="match status" value="1"/>
</dbReference>
<dbReference type="Pfam" id="PF12872">
    <property type="entry name" value="OST-HTH"/>
    <property type="match status" value="3"/>
</dbReference>
<dbReference type="Pfam" id="PF00567">
    <property type="entry name" value="TUDOR"/>
    <property type="match status" value="1"/>
</dbReference>
<dbReference type="SMART" id="SM00333">
    <property type="entry name" value="TUDOR"/>
    <property type="match status" value="1"/>
</dbReference>
<dbReference type="SUPFAM" id="SSF63748">
    <property type="entry name" value="Tudor/PWWP/MBT"/>
    <property type="match status" value="1"/>
</dbReference>
<dbReference type="PROSITE" id="PS51644">
    <property type="entry name" value="HTH_OST"/>
    <property type="match status" value="3"/>
</dbReference>
<dbReference type="PROSITE" id="PS50304">
    <property type="entry name" value="TUDOR"/>
    <property type="match status" value="1"/>
</dbReference>
<proteinExistence type="inferred from homology"/>
<reference key="1">
    <citation type="journal article" date="2009" name="Science">
        <title>The genome sequence of taurine cattle: a window to ruminant biology and evolution.</title>
        <authorList>
            <consortium name="The bovine genome sequencing and analysis consortium"/>
        </authorList>
    </citation>
    <scope>NUCLEOTIDE SEQUENCE [LARGE SCALE GENOMIC DNA]</scope>
</reference>
<comment type="function">
    <text evidence="1">Required during spermiogenesis to participate in the repression transposable elements and prevent their mobilization, which is essential for the germline integrity. Probably acts via the piRNA metabolic process, which mediates the repression of transposable elements during meiosis by forming complexes composed of piRNAs and Piwi proteins and govern the methylation and subsequent repression of transposons. Required for chromatoid body (CB) assembly (By similarity).</text>
</comment>
<comment type="subcellular location">
    <subcellularLocation>
        <location evidence="1">Cytoplasm</location>
    </subcellularLocation>
    <text evidence="1">Localizes to chromatoid body (CB) and pi-body (also called intermitochondrial cementin), 2 cytoplasmic ribonucleoprotein granules involved in RNA processing for spermatogenesis.</text>
</comment>
<comment type="similarity">
    <text evidence="6">Belongs to the TDRD5 family.</text>
</comment>
<name>TDRD5_BOVIN</name>
<protein>
    <recommendedName>
        <fullName>Tudor domain-containing protein 5</fullName>
    </recommendedName>
</protein>
<evidence type="ECO:0000250" key="1"/>
<evidence type="ECO:0000250" key="2">
    <source>
        <dbReference type="UniProtKB" id="Q5VCS6"/>
    </source>
</evidence>
<evidence type="ECO:0000255" key="3">
    <source>
        <dbReference type="PROSITE-ProRule" id="PRU00211"/>
    </source>
</evidence>
<evidence type="ECO:0000255" key="4">
    <source>
        <dbReference type="PROSITE-ProRule" id="PRU00975"/>
    </source>
</evidence>
<evidence type="ECO:0000256" key="5">
    <source>
        <dbReference type="SAM" id="MobiDB-lite"/>
    </source>
</evidence>
<evidence type="ECO:0000305" key="6"/>
<keyword id="KW-0963">Cytoplasm</keyword>
<keyword id="KW-0217">Developmental protein</keyword>
<keyword id="KW-0221">Differentiation</keyword>
<keyword id="KW-0597">Phosphoprotein</keyword>
<keyword id="KW-1185">Reference proteome</keyword>
<keyword id="KW-0677">Repeat</keyword>
<keyword id="KW-0744">Spermatogenesis</keyword>
<feature type="chain" id="PRO_0000408346" description="Tudor domain-containing protein 5">
    <location>
        <begin position="1"/>
        <end position="975"/>
    </location>
</feature>
<feature type="domain" description="HTH OST-type 1" evidence="4">
    <location>
        <begin position="7"/>
        <end position="80"/>
    </location>
</feature>
<feature type="domain" description="HTH OST-type 2" evidence="4">
    <location>
        <begin position="127"/>
        <end position="202"/>
    </location>
</feature>
<feature type="domain" description="HTH OST-type 3" evidence="4">
    <location>
        <begin position="299"/>
        <end position="373"/>
    </location>
</feature>
<feature type="domain" description="Tudor" evidence="3">
    <location>
        <begin position="529"/>
        <end position="588"/>
    </location>
</feature>
<feature type="region of interest" description="Disordered" evidence="5">
    <location>
        <begin position="820"/>
        <end position="843"/>
    </location>
</feature>
<feature type="region of interest" description="Disordered" evidence="5">
    <location>
        <begin position="864"/>
        <end position="905"/>
    </location>
</feature>
<feature type="compositionally biased region" description="Polar residues" evidence="5">
    <location>
        <begin position="831"/>
        <end position="842"/>
    </location>
</feature>
<feature type="compositionally biased region" description="Polar residues" evidence="5">
    <location>
        <begin position="864"/>
        <end position="894"/>
    </location>
</feature>
<feature type="modified residue" description="Phosphoserine" evidence="2">
    <location>
        <position position="891"/>
    </location>
</feature>